<accession>P0AFZ2</accession>
<accession>P31143</accession>
<accession>P76579</accession>
<comment type="function">
    <text evidence="1">May be involved in the enhancement of serine-sensitivity.</text>
</comment>
<evidence type="ECO:0000250" key="1"/>
<protein>
    <recommendedName>
        <fullName>Protein SseB</fullName>
    </recommendedName>
</protein>
<organism>
    <name type="scientific">Shigella flexneri</name>
    <dbReference type="NCBI Taxonomy" id="623"/>
    <lineage>
        <taxon>Bacteria</taxon>
        <taxon>Pseudomonadati</taxon>
        <taxon>Pseudomonadota</taxon>
        <taxon>Gammaproteobacteria</taxon>
        <taxon>Enterobacterales</taxon>
        <taxon>Enterobacteriaceae</taxon>
        <taxon>Shigella</taxon>
    </lineage>
</organism>
<reference key="1">
    <citation type="journal article" date="2002" name="Nucleic Acids Res.">
        <title>Genome sequence of Shigella flexneri 2a: insights into pathogenicity through comparison with genomes of Escherichia coli K12 and O157.</title>
        <authorList>
            <person name="Jin Q."/>
            <person name="Yuan Z."/>
            <person name="Xu J."/>
            <person name="Wang Y."/>
            <person name="Shen Y."/>
            <person name="Lu W."/>
            <person name="Wang J."/>
            <person name="Liu H."/>
            <person name="Yang J."/>
            <person name="Yang F."/>
            <person name="Zhang X."/>
            <person name="Zhang J."/>
            <person name="Yang G."/>
            <person name="Wu H."/>
            <person name="Qu D."/>
            <person name="Dong J."/>
            <person name="Sun L."/>
            <person name="Xue Y."/>
            <person name="Zhao A."/>
            <person name="Gao Y."/>
            <person name="Zhu J."/>
            <person name="Kan B."/>
            <person name="Ding K."/>
            <person name="Chen S."/>
            <person name="Cheng H."/>
            <person name="Yao Z."/>
            <person name="He B."/>
            <person name="Chen R."/>
            <person name="Ma D."/>
            <person name="Qiang B."/>
            <person name="Wen Y."/>
            <person name="Hou Y."/>
            <person name="Yu J."/>
        </authorList>
    </citation>
    <scope>NUCLEOTIDE SEQUENCE [LARGE SCALE GENOMIC DNA]</scope>
    <source>
        <strain>301 / Serotype 2a</strain>
    </source>
</reference>
<reference key="2">
    <citation type="journal article" date="2003" name="Infect. Immun.">
        <title>Complete genome sequence and comparative genomics of Shigella flexneri serotype 2a strain 2457T.</title>
        <authorList>
            <person name="Wei J."/>
            <person name="Goldberg M.B."/>
            <person name="Burland V."/>
            <person name="Venkatesan M.M."/>
            <person name="Deng W."/>
            <person name="Fournier G."/>
            <person name="Mayhew G.F."/>
            <person name="Plunkett G. III"/>
            <person name="Rose D.J."/>
            <person name="Darling A."/>
            <person name="Mau B."/>
            <person name="Perna N.T."/>
            <person name="Payne S.M."/>
            <person name="Runyen-Janecky L.J."/>
            <person name="Zhou S."/>
            <person name="Schwartz D.C."/>
            <person name="Blattner F.R."/>
        </authorList>
    </citation>
    <scope>NUCLEOTIDE SEQUENCE [LARGE SCALE GENOMIC DNA]</scope>
    <source>
        <strain>ATCC 700930 / 2457T / Serotype 2a</strain>
    </source>
</reference>
<sequence>MSETKNELEDLLEKAATEPAHRPAFFRTLLESTVWVPGTAAQGEAVVEDSALDLQHWEKEDGTSVIPFFTSLEALQQAVEDEQAFVVMPVRTLFEMTLGETLFLNAKLPTGKEFMPREISLLIGEEGNPLSSQEILEGGESLILSEVAEPPAQMIDSLTTLFKTIKPVKRAFICSIKENEEAQPNLLIGIEADGDIEEIIQATGSVATDTLPGDEPIDICQVKKGEKGISHFITEHIAPFYERRWGGFLRDFKQNRII</sequence>
<name>SSEB_SHIFL</name>
<feature type="chain" id="PRO_0000072210" description="Protein SseB">
    <location>
        <begin position="1"/>
        <end position="258"/>
    </location>
</feature>
<keyword id="KW-1185">Reference proteome</keyword>
<gene>
    <name type="primary">sseB</name>
    <name type="ordered locus">SF2569</name>
    <name type="ordered locus">S2741</name>
</gene>
<proteinExistence type="inferred from homology"/>
<dbReference type="EMBL" id="AE005674">
    <property type="protein sequence ID" value="AAN44068.2"/>
    <property type="molecule type" value="Genomic_DNA"/>
</dbReference>
<dbReference type="EMBL" id="AE014073">
    <property type="protein sequence ID" value="AAP17893.1"/>
    <property type="molecule type" value="Genomic_DNA"/>
</dbReference>
<dbReference type="RefSeq" id="NP_708361.2">
    <property type="nucleotide sequence ID" value="NC_004337.2"/>
</dbReference>
<dbReference type="RefSeq" id="WP_001295479.1">
    <property type="nucleotide sequence ID" value="NZ_WPGW01000021.1"/>
</dbReference>
<dbReference type="STRING" id="198214.SF2569"/>
<dbReference type="PaxDb" id="198214-SF2569"/>
<dbReference type="GeneID" id="1025631"/>
<dbReference type="KEGG" id="sfl:SF2569"/>
<dbReference type="KEGG" id="sfx:S2741"/>
<dbReference type="PATRIC" id="fig|198214.7.peg.3068"/>
<dbReference type="HOGENOM" id="CLU_093817_1_0_6"/>
<dbReference type="Proteomes" id="UP000001006">
    <property type="component" value="Chromosome"/>
</dbReference>
<dbReference type="Proteomes" id="UP000002673">
    <property type="component" value="Chromosome"/>
</dbReference>
<dbReference type="InterPro" id="IPR027945">
    <property type="entry name" value="SseB_C"/>
</dbReference>
<dbReference type="InterPro" id="IPR009839">
    <property type="entry name" value="SseB_N"/>
</dbReference>
<dbReference type="NCBIfam" id="NF008624">
    <property type="entry name" value="PRK11611.1"/>
    <property type="match status" value="1"/>
</dbReference>
<dbReference type="Pfam" id="PF07179">
    <property type="entry name" value="SseB"/>
    <property type="match status" value="1"/>
</dbReference>
<dbReference type="Pfam" id="PF14581">
    <property type="entry name" value="SseB_C"/>
    <property type="match status" value="1"/>
</dbReference>